<comment type="function">
    <text evidence="1">GTPase that plays an essential role in the late steps of ribosome biogenesis.</text>
</comment>
<comment type="subunit">
    <text evidence="1">Associates with the 50S ribosomal subunit.</text>
</comment>
<comment type="similarity">
    <text evidence="1">Belongs to the TRAFAC class TrmE-Era-EngA-EngB-Septin-like GTPase superfamily. EngA (Der) GTPase family.</text>
</comment>
<gene>
    <name evidence="1" type="primary">der</name>
    <name type="synonym">engA</name>
    <name type="ordered locus">Aasi_1169</name>
</gene>
<organism>
    <name type="scientific">Amoebophilus asiaticus (strain 5a2)</name>
    <dbReference type="NCBI Taxonomy" id="452471"/>
    <lineage>
        <taxon>Bacteria</taxon>
        <taxon>Pseudomonadati</taxon>
        <taxon>Bacteroidota</taxon>
        <taxon>Cytophagia</taxon>
        <taxon>Cytophagales</taxon>
        <taxon>Amoebophilaceae</taxon>
        <taxon>Candidatus Amoebophilus</taxon>
    </lineage>
</organism>
<dbReference type="EMBL" id="CP001102">
    <property type="protein sequence ID" value="ACE06503.1"/>
    <property type="molecule type" value="Genomic_DNA"/>
</dbReference>
<dbReference type="RefSeq" id="WP_012473256.1">
    <property type="nucleotide sequence ID" value="NC_010830.1"/>
</dbReference>
<dbReference type="SMR" id="B3ETF1"/>
<dbReference type="STRING" id="452471.Aasi_1169"/>
<dbReference type="KEGG" id="aas:Aasi_1169"/>
<dbReference type="eggNOG" id="COG1160">
    <property type="taxonomic scope" value="Bacteria"/>
</dbReference>
<dbReference type="HOGENOM" id="CLU_016077_6_2_10"/>
<dbReference type="OrthoDB" id="9805918at2"/>
<dbReference type="Proteomes" id="UP000001227">
    <property type="component" value="Chromosome"/>
</dbReference>
<dbReference type="GO" id="GO:0005525">
    <property type="term" value="F:GTP binding"/>
    <property type="evidence" value="ECO:0007669"/>
    <property type="project" value="UniProtKB-UniRule"/>
</dbReference>
<dbReference type="GO" id="GO:0043022">
    <property type="term" value="F:ribosome binding"/>
    <property type="evidence" value="ECO:0007669"/>
    <property type="project" value="TreeGrafter"/>
</dbReference>
<dbReference type="GO" id="GO:0042254">
    <property type="term" value="P:ribosome biogenesis"/>
    <property type="evidence" value="ECO:0007669"/>
    <property type="project" value="UniProtKB-KW"/>
</dbReference>
<dbReference type="CDD" id="cd01894">
    <property type="entry name" value="EngA1"/>
    <property type="match status" value="1"/>
</dbReference>
<dbReference type="CDD" id="cd01895">
    <property type="entry name" value="EngA2"/>
    <property type="match status" value="1"/>
</dbReference>
<dbReference type="FunFam" id="3.30.300.20:FF:000004">
    <property type="entry name" value="GTPase Der"/>
    <property type="match status" value="1"/>
</dbReference>
<dbReference type="FunFam" id="3.40.50.300:FF:000040">
    <property type="entry name" value="GTPase Der"/>
    <property type="match status" value="1"/>
</dbReference>
<dbReference type="FunFam" id="3.40.50.300:FF:000057">
    <property type="entry name" value="GTPase Der"/>
    <property type="match status" value="1"/>
</dbReference>
<dbReference type="Gene3D" id="3.30.300.20">
    <property type="match status" value="1"/>
</dbReference>
<dbReference type="Gene3D" id="3.40.50.300">
    <property type="entry name" value="P-loop containing nucleotide triphosphate hydrolases"/>
    <property type="match status" value="2"/>
</dbReference>
<dbReference type="HAMAP" id="MF_00195">
    <property type="entry name" value="GTPase_Der"/>
    <property type="match status" value="1"/>
</dbReference>
<dbReference type="InterPro" id="IPR031166">
    <property type="entry name" value="G_ENGA"/>
</dbReference>
<dbReference type="InterPro" id="IPR006073">
    <property type="entry name" value="GTP-bd"/>
</dbReference>
<dbReference type="InterPro" id="IPR016484">
    <property type="entry name" value="GTPase_Der"/>
</dbReference>
<dbReference type="InterPro" id="IPR032859">
    <property type="entry name" value="KH_dom-like"/>
</dbReference>
<dbReference type="InterPro" id="IPR015946">
    <property type="entry name" value="KH_dom-like_a/b"/>
</dbReference>
<dbReference type="InterPro" id="IPR027417">
    <property type="entry name" value="P-loop_NTPase"/>
</dbReference>
<dbReference type="InterPro" id="IPR005225">
    <property type="entry name" value="Small_GTP-bd"/>
</dbReference>
<dbReference type="NCBIfam" id="TIGR03594">
    <property type="entry name" value="GTPase_EngA"/>
    <property type="match status" value="1"/>
</dbReference>
<dbReference type="NCBIfam" id="TIGR00231">
    <property type="entry name" value="small_GTP"/>
    <property type="match status" value="2"/>
</dbReference>
<dbReference type="PANTHER" id="PTHR43834">
    <property type="entry name" value="GTPASE DER"/>
    <property type="match status" value="1"/>
</dbReference>
<dbReference type="PANTHER" id="PTHR43834:SF6">
    <property type="entry name" value="GTPASE DER"/>
    <property type="match status" value="1"/>
</dbReference>
<dbReference type="Pfam" id="PF14714">
    <property type="entry name" value="KH_dom-like"/>
    <property type="match status" value="1"/>
</dbReference>
<dbReference type="Pfam" id="PF01926">
    <property type="entry name" value="MMR_HSR1"/>
    <property type="match status" value="2"/>
</dbReference>
<dbReference type="PIRSF" id="PIRSF006485">
    <property type="entry name" value="GTP-binding_EngA"/>
    <property type="match status" value="1"/>
</dbReference>
<dbReference type="PRINTS" id="PR00326">
    <property type="entry name" value="GTP1OBG"/>
</dbReference>
<dbReference type="SUPFAM" id="SSF52540">
    <property type="entry name" value="P-loop containing nucleoside triphosphate hydrolases"/>
    <property type="match status" value="2"/>
</dbReference>
<dbReference type="PROSITE" id="PS51712">
    <property type="entry name" value="G_ENGA"/>
    <property type="match status" value="2"/>
</dbReference>
<feature type="chain" id="PRO_1000099089" description="GTPase Der">
    <location>
        <begin position="1"/>
        <end position="433"/>
    </location>
</feature>
<feature type="domain" description="EngA-type G 1">
    <location>
        <begin position="3"/>
        <end position="167"/>
    </location>
</feature>
<feature type="domain" description="EngA-type G 2">
    <location>
        <begin position="174"/>
        <end position="349"/>
    </location>
</feature>
<feature type="domain" description="KH-like" evidence="1">
    <location>
        <begin position="350"/>
        <end position="433"/>
    </location>
</feature>
<feature type="binding site" evidence="1">
    <location>
        <begin position="9"/>
        <end position="16"/>
    </location>
    <ligand>
        <name>GTP</name>
        <dbReference type="ChEBI" id="CHEBI:37565"/>
        <label>1</label>
    </ligand>
</feature>
<feature type="binding site" evidence="1">
    <location>
        <begin position="56"/>
        <end position="60"/>
    </location>
    <ligand>
        <name>GTP</name>
        <dbReference type="ChEBI" id="CHEBI:37565"/>
        <label>1</label>
    </ligand>
</feature>
<feature type="binding site" evidence="1">
    <location>
        <begin position="119"/>
        <end position="122"/>
    </location>
    <ligand>
        <name>GTP</name>
        <dbReference type="ChEBI" id="CHEBI:37565"/>
        <label>1</label>
    </ligand>
</feature>
<feature type="binding site" evidence="1">
    <location>
        <begin position="180"/>
        <end position="187"/>
    </location>
    <ligand>
        <name>GTP</name>
        <dbReference type="ChEBI" id="CHEBI:37565"/>
        <label>2</label>
    </ligand>
</feature>
<feature type="binding site" evidence="1">
    <location>
        <begin position="227"/>
        <end position="231"/>
    </location>
    <ligand>
        <name>GTP</name>
        <dbReference type="ChEBI" id="CHEBI:37565"/>
        <label>2</label>
    </ligand>
</feature>
<feature type="binding site" evidence="1">
    <location>
        <begin position="292"/>
        <end position="295"/>
    </location>
    <ligand>
        <name>GTP</name>
        <dbReference type="ChEBI" id="CHEBI:37565"/>
        <label>2</label>
    </ligand>
</feature>
<reference key="1">
    <citation type="journal article" date="2010" name="J. Bacteriol.">
        <title>The genome of the amoeba symbiont 'Candidatus Amoebophilus asiaticus' reveals common mechanisms for host cell interaction among amoeba-associated bacteria.</title>
        <authorList>
            <person name="Schmitz-Esser S."/>
            <person name="Tischler P."/>
            <person name="Arnold R."/>
            <person name="Montanaro J."/>
            <person name="Wagner M."/>
            <person name="Rattei T."/>
            <person name="Horn M."/>
        </authorList>
    </citation>
    <scope>NUCLEOTIDE SEQUENCE [LARGE SCALE GENOMIC DNA]</scope>
    <source>
        <strain>5a2</strain>
    </source>
</reference>
<keyword id="KW-0342">GTP-binding</keyword>
<keyword id="KW-0547">Nucleotide-binding</keyword>
<keyword id="KW-1185">Reference proteome</keyword>
<keyword id="KW-0677">Repeat</keyword>
<keyword id="KW-0690">Ribosome biogenesis</keyword>
<sequence>MANIVAIVGRPNVGKSTLFNRLVEERKAIMASESGTTRDRHYGYATWNGKNFTVVDTGGYVQGSSDIFEKSICEQAKIAIEEASVVLFMVDCQVGITAMDKEVAHILRAADKPVLLVANKADNVDTALMAHEFHALGLGNPYPISAASGTGTGDLLDQVTVYCQDTIEQETDIPKIAILGRPNVGKSSLLNALLGEERSIVTPIAGTTRDAIDTTYNLYGKNFILTDTAGIRKKSKVKEDIEFYSTLRALKALQDADVCIIMIDATLGLEGQDVNLISLAYKYKKGILLLVNKWDLIKKDNHTNAQFKKNIEQELGAHSHIPILFISALHKQRIFQAIEKALEVYTNKTQKISTAALNQTMLPVIERYPPPAVKGKYIKIKYVARLPTHTPVIAFFCNLPQYVQPPYKRYLENQLRKNFNLAGVPVQLVFRKK</sequence>
<evidence type="ECO:0000255" key="1">
    <source>
        <dbReference type="HAMAP-Rule" id="MF_00195"/>
    </source>
</evidence>
<proteinExistence type="inferred from homology"/>
<accession>B3ETF1</accession>
<name>DER_AMOA5</name>
<protein>
    <recommendedName>
        <fullName evidence="1">GTPase Der</fullName>
    </recommendedName>
    <alternativeName>
        <fullName evidence="1">GTP-binding protein EngA</fullName>
    </alternativeName>
</protein>